<dbReference type="EMBL" id="AF068863">
    <property type="protein sequence ID" value="AAC25187.1"/>
    <property type="molecule type" value="mRNA"/>
</dbReference>
<dbReference type="EMBL" id="AJ245901">
    <property type="protein sequence ID" value="CAB55487.1"/>
    <property type="molecule type" value="mRNA"/>
</dbReference>
<dbReference type="EMBL" id="BT019402">
    <property type="protein sequence ID" value="AAV38209.1"/>
    <property type="molecule type" value="mRNA"/>
</dbReference>
<dbReference type="EMBL" id="BT019403">
    <property type="protein sequence ID" value="AAV38210.1"/>
    <property type="molecule type" value="mRNA"/>
</dbReference>
<dbReference type="EMBL" id="AK312923">
    <property type="protein sequence ID" value="BAG35768.1"/>
    <property type="molecule type" value="mRNA"/>
</dbReference>
<dbReference type="EMBL" id="CH471052">
    <property type="protein sequence ID" value="EAW78505.1"/>
    <property type="molecule type" value="Genomic_DNA"/>
</dbReference>
<dbReference type="EMBL" id="CH471052">
    <property type="protein sequence ID" value="EAW78509.1"/>
    <property type="molecule type" value="Genomic_DNA"/>
</dbReference>
<dbReference type="EMBL" id="BC013577">
    <property type="protein sequence ID" value="AAH13577.1"/>
    <property type="molecule type" value="mRNA"/>
</dbReference>
<dbReference type="CCDS" id="CCDS3213.1"/>
<dbReference type="RefSeq" id="NP_005593.2">
    <property type="nucleotide sequence ID" value="NM_005602.5"/>
</dbReference>
<dbReference type="SMR" id="O75508"/>
<dbReference type="BioGRID" id="111051">
    <property type="interactions" value="10"/>
</dbReference>
<dbReference type="FunCoup" id="O75508">
    <property type="interactions" value="374"/>
</dbReference>
<dbReference type="IntAct" id="O75508">
    <property type="interactions" value="12"/>
</dbReference>
<dbReference type="STRING" id="9606.ENSP00000064724"/>
<dbReference type="GlyGen" id="O75508">
    <property type="glycosylation" value="1 site, 1 O-linked glycan (1 site)"/>
</dbReference>
<dbReference type="iPTMnet" id="O75508"/>
<dbReference type="PhosphoSitePlus" id="O75508"/>
<dbReference type="SwissPalm" id="O75508"/>
<dbReference type="BioMuta" id="CLDN11"/>
<dbReference type="jPOST" id="O75508"/>
<dbReference type="MassIVE" id="O75508"/>
<dbReference type="PaxDb" id="9606-ENSP00000064724"/>
<dbReference type="PeptideAtlas" id="O75508"/>
<dbReference type="ProteomicsDB" id="50057"/>
<dbReference type="Antibodypedia" id="2785">
    <property type="antibodies" value="355 antibodies from 38 providers"/>
</dbReference>
<dbReference type="DNASU" id="5010"/>
<dbReference type="Ensembl" id="ENST00000064724.8">
    <property type="protein sequence ID" value="ENSP00000064724.4"/>
    <property type="gene ID" value="ENSG00000013297.12"/>
</dbReference>
<dbReference type="GeneID" id="5010"/>
<dbReference type="KEGG" id="hsa:5010"/>
<dbReference type="MANE-Select" id="ENST00000064724.8">
    <property type="protein sequence ID" value="ENSP00000064724.4"/>
    <property type="RefSeq nucleotide sequence ID" value="NM_005602.6"/>
    <property type="RefSeq protein sequence ID" value="NP_005593.2"/>
</dbReference>
<dbReference type="UCSC" id="uc003fgx.4">
    <property type="organism name" value="human"/>
</dbReference>
<dbReference type="AGR" id="HGNC:8514"/>
<dbReference type="CTD" id="5010"/>
<dbReference type="DisGeNET" id="5010"/>
<dbReference type="GeneCards" id="CLDN11"/>
<dbReference type="HGNC" id="HGNC:8514">
    <property type="gene designation" value="CLDN11"/>
</dbReference>
<dbReference type="HPA" id="ENSG00000013297">
    <property type="expression patterns" value="Group enriched (brain, ovary, testis)"/>
</dbReference>
<dbReference type="MalaCards" id="CLDN11"/>
<dbReference type="MIM" id="601326">
    <property type="type" value="gene"/>
</dbReference>
<dbReference type="MIM" id="619328">
    <property type="type" value="phenotype"/>
</dbReference>
<dbReference type="neXtProt" id="NX_O75508"/>
<dbReference type="OpenTargets" id="ENSG00000013297"/>
<dbReference type="PharmGKB" id="PA26559"/>
<dbReference type="VEuPathDB" id="HostDB:ENSG00000013297"/>
<dbReference type="eggNOG" id="ENOG502QSDJ">
    <property type="taxonomic scope" value="Eukaryota"/>
</dbReference>
<dbReference type="GeneTree" id="ENSGT00890000139496"/>
<dbReference type="HOGENOM" id="CLU_094997_0_0_1"/>
<dbReference type="InParanoid" id="O75508"/>
<dbReference type="OMA" id="CIRMGNE"/>
<dbReference type="OrthoDB" id="9411914at2759"/>
<dbReference type="PAN-GO" id="O75508">
    <property type="GO annotations" value="4 GO annotations based on evolutionary models"/>
</dbReference>
<dbReference type="PhylomeDB" id="O75508"/>
<dbReference type="TreeFam" id="TF331936"/>
<dbReference type="PathwayCommons" id="O75508"/>
<dbReference type="Reactome" id="R-HSA-420029">
    <property type="pathway name" value="Tight junction interactions"/>
</dbReference>
<dbReference type="SignaLink" id="O75508"/>
<dbReference type="BioGRID-ORCS" id="5010">
    <property type="hits" value="11 hits in 1152 CRISPR screens"/>
</dbReference>
<dbReference type="ChiTaRS" id="CLDN11">
    <property type="organism name" value="human"/>
</dbReference>
<dbReference type="GeneWiki" id="CLDN11"/>
<dbReference type="GenomeRNAi" id="5010"/>
<dbReference type="Pharos" id="O75508">
    <property type="development level" value="Tbio"/>
</dbReference>
<dbReference type="PRO" id="PR:O75508"/>
<dbReference type="Proteomes" id="UP000005640">
    <property type="component" value="Chromosome 3"/>
</dbReference>
<dbReference type="RNAct" id="O75508">
    <property type="molecule type" value="protein"/>
</dbReference>
<dbReference type="Bgee" id="ENSG00000013297">
    <property type="expression patterns" value="Expressed in inferior vagus X ganglion and 171 other cell types or tissues"/>
</dbReference>
<dbReference type="GO" id="GO:0030424">
    <property type="term" value="C:axon"/>
    <property type="evidence" value="ECO:0000314"/>
    <property type="project" value="ARUK-UCL"/>
</dbReference>
<dbReference type="GO" id="GO:0045178">
    <property type="term" value="C:basal part of cell"/>
    <property type="evidence" value="ECO:0007669"/>
    <property type="project" value="Ensembl"/>
</dbReference>
<dbReference type="GO" id="GO:0005923">
    <property type="term" value="C:bicellular tight junction"/>
    <property type="evidence" value="ECO:0000250"/>
    <property type="project" value="UniProtKB"/>
</dbReference>
<dbReference type="GO" id="GO:0030054">
    <property type="term" value="C:cell junction"/>
    <property type="evidence" value="ECO:0000314"/>
    <property type="project" value="HPA"/>
</dbReference>
<dbReference type="GO" id="GO:0005811">
    <property type="term" value="C:lipid droplet"/>
    <property type="evidence" value="ECO:0000314"/>
    <property type="project" value="HPA"/>
</dbReference>
<dbReference type="GO" id="GO:0005883">
    <property type="term" value="C:neurofilament"/>
    <property type="evidence" value="ECO:0000314"/>
    <property type="project" value="ARUK-UCL"/>
</dbReference>
<dbReference type="GO" id="GO:0005886">
    <property type="term" value="C:plasma membrane"/>
    <property type="evidence" value="ECO:0000314"/>
    <property type="project" value="UniProtKB"/>
</dbReference>
<dbReference type="GO" id="GO:0070160">
    <property type="term" value="C:tight junction"/>
    <property type="evidence" value="ECO:0000314"/>
    <property type="project" value="ARUK-UCL"/>
</dbReference>
<dbReference type="GO" id="GO:0042802">
    <property type="term" value="F:identical protein binding"/>
    <property type="evidence" value="ECO:0000315"/>
    <property type="project" value="ARUK-UCL"/>
</dbReference>
<dbReference type="GO" id="GO:0005198">
    <property type="term" value="F:structural molecule activity"/>
    <property type="evidence" value="ECO:0007669"/>
    <property type="project" value="InterPro"/>
</dbReference>
<dbReference type="GO" id="GO:0008366">
    <property type="term" value="P:axon ensheathment"/>
    <property type="evidence" value="ECO:0007669"/>
    <property type="project" value="Ensembl"/>
</dbReference>
<dbReference type="GO" id="GO:0070830">
    <property type="term" value="P:bicellular tight junction assembly"/>
    <property type="evidence" value="ECO:0000318"/>
    <property type="project" value="GO_Central"/>
</dbReference>
<dbReference type="GO" id="GO:0016338">
    <property type="term" value="P:calcium-independent cell-cell adhesion via plasma membrane cell-adhesion molecules"/>
    <property type="evidence" value="ECO:0000250"/>
    <property type="project" value="UniProtKB"/>
</dbReference>
<dbReference type="GO" id="GO:0007155">
    <property type="term" value="P:cell adhesion"/>
    <property type="evidence" value="ECO:0000318"/>
    <property type="project" value="GO_Central"/>
</dbReference>
<dbReference type="GO" id="GO:0007283">
    <property type="term" value="P:spermatogenesis"/>
    <property type="evidence" value="ECO:0007669"/>
    <property type="project" value="Ensembl"/>
</dbReference>
<dbReference type="GO" id="GO:0120192">
    <property type="term" value="P:tight junction assembly"/>
    <property type="evidence" value="ECO:0000314"/>
    <property type="project" value="ARUK-UCL"/>
</dbReference>
<dbReference type="FunFam" id="1.20.140.150:FF:000015">
    <property type="entry name" value="Claudin"/>
    <property type="match status" value="1"/>
</dbReference>
<dbReference type="Gene3D" id="1.20.140.150">
    <property type="match status" value="1"/>
</dbReference>
<dbReference type="InterPro" id="IPR006187">
    <property type="entry name" value="Claudin"/>
</dbReference>
<dbReference type="InterPro" id="IPR003555">
    <property type="entry name" value="Claudin11"/>
</dbReference>
<dbReference type="InterPro" id="IPR017974">
    <property type="entry name" value="Claudin_CS"/>
</dbReference>
<dbReference type="InterPro" id="IPR004031">
    <property type="entry name" value="PMP22/EMP/MP20/Claudin"/>
</dbReference>
<dbReference type="PANTHER" id="PTHR12002">
    <property type="entry name" value="CLAUDIN"/>
    <property type="match status" value="1"/>
</dbReference>
<dbReference type="Pfam" id="PF00822">
    <property type="entry name" value="PMP22_Claudin"/>
    <property type="match status" value="1"/>
</dbReference>
<dbReference type="PRINTS" id="PR01077">
    <property type="entry name" value="CLAUDIN"/>
</dbReference>
<dbReference type="PRINTS" id="PR01384">
    <property type="entry name" value="CLAUDIN11"/>
</dbReference>
<dbReference type="PROSITE" id="PS01346">
    <property type="entry name" value="CLAUDIN"/>
    <property type="match status" value="1"/>
</dbReference>
<feature type="chain" id="PRO_0000144760" description="Claudin-11">
    <location>
        <begin position="1"/>
        <end position="207"/>
    </location>
</feature>
<feature type="topological domain" description="Cytoplasmic" evidence="2">
    <location>
        <position position="1"/>
    </location>
</feature>
<feature type="transmembrane region" description="Helical" evidence="2">
    <location>
        <begin position="2"/>
        <end position="22"/>
    </location>
</feature>
<feature type="topological domain" description="Extracellular" evidence="2">
    <location>
        <begin position="23"/>
        <end position="82"/>
    </location>
</feature>
<feature type="transmembrane region" description="Helical" evidence="2">
    <location>
        <begin position="83"/>
        <end position="103"/>
    </location>
</feature>
<feature type="topological domain" description="Cytoplasmic" evidence="2">
    <location>
        <begin position="104"/>
        <end position="122"/>
    </location>
</feature>
<feature type="transmembrane region" description="Helical" evidence="2">
    <location>
        <begin position="123"/>
        <end position="143"/>
    </location>
</feature>
<feature type="topological domain" description="Extracellular" evidence="2">
    <location>
        <begin position="144"/>
        <end position="157"/>
    </location>
</feature>
<feature type="transmembrane region" description="Helical" evidence="2">
    <location>
        <begin position="158"/>
        <end position="178"/>
    </location>
</feature>
<feature type="topological domain" description="Cytoplasmic" evidence="2">
    <location>
        <begin position="179"/>
        <end position="207"/>
    </location>
</feature>
<feature type="modified residue" description="Phosphoserine" evidence="1">
    <location>
        <position position="197"/>
    </location>
</feature>
<feature type="modified residue" description="Phosphoserine" evidence="1">
    <location>
        <position position="198"/>
    </location>
</feature>
<feature type="sequence conflict" description="In Ref. 3; AAV38209/AAV38210." evidence="6" ref="3">
    <original>A</original>
    <variation>T</variation>
    <location>
        <position position="160"/>
    </location>
</feature>
<feature type="sequence conflict" description="In Ref. 1; AAC25187." evidence="6" ref="1">
    <original>RFYYTAGSSSPTHAKSAHV</original>
    <variation>VSTTLRALAPRLMRRVPTYKRAARLPTEVL</variation>
    <location>
        <begin position="189"/>
        <end position="207"/>
    </location>
</feature>
<organism>
    <name type="scientific">Homo sapiens</name>
    <name type="common">Human</name>
    <dbReference type="NCBI Taxonomy" id="9606"/>
    <lineage>
        <taxon>Eukaryota</taxon>
        <taxon>Metazoa</taxon>
        <taxon>Chordata</taxon>
        <taxon>Craniata</taxon>
        <taxon>Vertebrata</taxon>
        <taxon>Euteleostomi</taxon>
        <taxon>Mammalia</taxon>
        <taxon>Eutheria</taxon>
        <taxon>Euarchontoglires</taxon>
        <taxon>Primates</taxon>
        <taxon>Haplorrhini</taxon>
        <taxon>Catarrhini</taxon>
        <taxon>Hominidae</taxon>
        <taxon>Homo</taxon>
    </lineage>
</organism>
<name>CLD11_HUMAN</name>
<reference key="1">
    <citation type="journal article" date="2000" name="J. Neurosci. Res.">
        <title>Involvement of OSP/claudin-11 in oligodendrocyte membrane interactions: role in biology and disease.</title>
        <authorList>
            <person name="Bronstein J.M."/>
            <person name="Tiwari-Woodruff S."/>
            <person name="Buznikov A.G."/>
            <person name="Stevens D.B."/>
        </authorList>
    </citation>
    <scope>NUCLEOTIDE SEQUENCE [MRNA]</scope>
    <source>
        <tissue>Spinal cord</tissue>
    </source>
</reference>
<reference key="2">
    <citation type="submission" date="1999-09" db="EMBL/GenBank/DDBJ databases">
        <authorList>
            <person name="Keen T.J."/>
            <person name="Inglehearn C.F."/>
        </authorList>
    </citation>
    <scope>NUCLEOTIDE SEQUENCE [MRNA]</scope>
</reference>
<reference key="3">
    <citation type="submission" date="2004-10" db="EMBL/GenBank/DDBJ databases">
        <title>Cloning of human full-length CDSs in BD Creator(TM) system donor vector.</title>
        <authorList>
            <person name="Kalnine N."/>
            <person name="Chen X."/>
            <person name="Rolfs A."/>
            <person name="Halleck A."/>
            <person name="Hines L."/>
            <person name="Eisenstein S."/>
            <person name="Koundinya M."/>
            <person name="Raphael J."/>
            <person name="Moreira D."/>
            <person name="Kelley T."/>
            <person name="LaBaer J."/>
            <person name="Lin Y."/>
            <person name="Phelan M."/>
            <person name="Farmer A."/>
        </authorList>
    </citation>
    <scope>NUCLEOTIDE SEQUENCE [LARGE SCALE MRNA]</scope>
</reference>
<reference key="4">
    <citation type="journal article" date="2004" name="Nat. Genet.">
        <title>Complete sequencing and characterization of 21,243 full-length human cDNAs.</title>
        <authorList>
            <person name="Ota T."/>
            <person name="Suzuki Y."/>
            <person name="Nishikawa T."/>
            <person name="Otsuki T."/>
            <person name="Sugiyama T."/>
            <person name="Irie R."/>
            <person name="Wakamatsu A."/>
            <person name="Hayashi K."/>
            <person name="Sato H."/>
            <person name="Nagai K."/>
            <person name="Kimura K."/>
            <person name="Makita H."/>
            <person name="Sekine M."/>
            <person name="Obayashi M."/>
            <person name="Nishi T."/>
            <person name="Shibahara T."/>
            <person name="Tanaka T."/>
            <person name="Ishii S."/>
            <person name="Yamamoto J."/>
            <person name="Saito K."/>
            <person name="Kawai Y."/>
            <person name="Isono Y."/>
            <person name="Nakamura Y."/>
            <person name="Nagahari K."/>
            <person name="Murakami K."/>
            <person name="Yasuda T."/>
            <person name="Iwayanagi T."/>
            <person name="Wagatsuma M."/>
            <person name="Shiratori A."/>
            <person name="Sudo H."/>
            <person name="Hosoiri T."/>
            <person name="Kaku Y."/>
            <person name="Kodaira H."/>
            <person name="Kondo H."/>
            <person name="Sugawara M."/>
            <person name="Takahashi M."/>
            <person name="Kanda K."/>
            <person name="Yokoi T."/>
            <person name="Furuya T."/>
            <person name="Kikkawa E."/>
            <person name="Omura Y."/>
            <person name="Abe K."/>
            <person name="Kamihara K."/>
            <person name="Katsuta N."/>
            <person name="Sato K."/>
            <person name="Tanikawa M."/>
            <person name="Yamazaki M."/>
            <person name="Ninomiya K."/>
            <person name="Ishibashi T."/>
            <person name="Yamashita H."/>
            <person name="Murakawa K."/>
            <person name="Fujimori K."/>
            <person name="Tanai H."/>
            <person name="Kimata M."/>
            <person name="Watanabe M."/>
            <person name="Hiraoka S."/>
            <person name="Chiba Y."/>
            <person name="Ishida S."/>
            <person name="Ono Y."/>
            <person name="Takiguchi S."/>
            <person name="Watanabe S."/>
            <person name="Yosida M."/>
            <person name="Hotuta T."/>
            <person name="Kusano J."/>
            <person name="Kanehori K."/>
            <person name="Takahashi-Fujii A."/>
            <person name="Hara H."/>
            <person name="Tanase T.-O."/>
            <person name="Nomura Y."/>
            <person name="Togiya S."/>
            <person name="Komai F."/>
            <person name="Hara R."/>
            <person name="Takeuchi K."/>
            <person name="Arita M."/>
            <person name="Imose N."/>
            <person name="Musashino K."/>
            <person name="Yuuki H."/>
            <person name="Oshima A."/>
            <person name="Sasaki N."/>
            <person name="Aotsuka S."/>
            <person name="Yoshikawa Y."/>
            <person name="Matsunawa H."/>
            <person name="Ichihara T."/>
            <person name="Shiohata N."/>
            <person name="Sano S."/>
            <person name="Moriya S."/>
            <person name="Momiyama H."/>
            <person name="Satoh N."/>
            <person name="Takami S."/>
            <person name="Terashima Y."/>
            <person name="Suzuki O."/>
            <person name="Nakagawa S."/>
            <person name="Senoh A."/>
            <person name="Mizoguchi H."/>
            <person name="Goto Y."/>
            <person name="Shimizu F."/>
            <person name="Wakebe H."/>
            <person name="Hishigaki H."/>
            <person name="Watanabe T."/>
            <person name="Sugiyama A."/>
            <person name="Takemoto M."/>
            <person name="Kawakami B."/>
            <person name="Yamazaki M."/>
            <person name="Watanabe K."/>
            <person name="Kumagai A."/>
            <person name="Itakura S."/>
            <person name="Fukuzumi Y."/>
            <person name="Fujimori Y."/>
            <person name="Komiyama M."/>
            <person name="Tashiro H."/>
            <person name="Tanigami A."/>
            <person name="Fujiwara T."/>
            <person name="Ono T."/>
            <person name="Yamada K."/>
            <person name="Fujii Y."/>
            <person name="Ozaki K."/>
            <person name="Hirao M."/>
            <person name="Ohmori Y."/>
            <person name="Kawabata A."/>
            <person name="Hikiji T."/>
            <person name="Kobatake N."/>
            <person name="Inagaki H."/>
            <person name="Ikema Y."/>
            <person name="Okamoto S."/>
            <person name="Okitani R."/>
            <person name="Kawakami T."/>
            <person name="Noguchi S."/>
            <person name="Itoh T."/>
            <person name="Shigeta K."/>
            <person name="Senba T."/>
            <person name="Matsumura K."/>
            <person name="Nakajima Y."/>
            <person name="Mizuno T."/>
            <person name="Morinaga M."/>
            <person name="Sasaki M."/>
            <person name="Togashi T."/>
            <person name="Oyama M."/>
            <person name="Hata H."/>
            <person name="Watanabe M."/>
            <person name="Komatsu T."/>
            <person name="Mizushima-Sugano J."/>
            <person name="Satoh T."/>
            <person name="Shirai Y."/>
            <person name="Takahashi Y."/>
            <person name="Nakagawa K."/>
            <person name="Okumura K."/>
            <person name="Nagase T."/>
            <person name="Nomura N."/>
            <person name="Kikuchi H."/>
            <person name="Masuho Y."/>
            <person name="Yamashita R."/>
            <person name="Nakai K."/>
            <person name="Yada T."/>
            <person name="Nakamura Y."/>
            <person name="Ohara O."/>
            <person name="Isogai T."/>
            <person name="Sugano S."/>
        </authorList>
    </citation>
    <scope>NUCLEOTIDE SEQUENCE [LARGE SCALE MRNA]</scope>
</reference>
<reference key="5">
    <citation type="submission" date="2005-09" db="EMBL/GenBank/DDBJ databases">
        <authorList>
            <person name="Mural R.J."/>
            <person name="Istrail S."/>
            <person name="Sutton G.G."/>
            <person name="Florea L."/>
            <person name="Halpern A.L."/>
            <person name="Mobarry C.M."/>
            <person name="Lippert R."/>
            <person name="Walenz B."/>
            <person name="Shatkay H."/>
            <person name="Dew I."/>
            <person name="Miller J.R."/>
            <person name="Flanigan M.J."/>
            <person name="Edwards N.J."/>
            <person name="Bolanos R."/>
            <person name="Fasulo D."/>
            <person name="Halldorsson B.V."/>
            <person name="Hannenhalli S."/>
            <person name="Turner R."/>
            <person name="Yooseph S."/>
            <person name="Lu F."/>
            <person name="Nusskern D.R."/>
            <person name="Shue B.C."/>
            <person name="Zheng X.H."/>
            <person name="Zhong F."/>
            <person name="Delcher A.L."/>
            <person name="Huson D.H."/>
            <person name="Kravitz S.A."/>
            <person name="Mouchard L."/>
            <person name="Reinert K."/>
            <person name="Remington K.A."/>
            <person name="Clark A.G."/>
            <person name="Waterman M.S."/>
            <person name="Eichler E.E."/>
            <person name="Adams M.D."/>
            <person name="Hunkapiller M.W."/>
            <person name="Myers E.W."/>
            <person name="Venter J.C."/>
        </authorList>
    </citation>
    <scope>NUCLEOTIDE SEQUENCE [LARGE SCALE GENOMIC DNA]</scope>
</reference>
<reference key="6">
    <citation type="journal article" date="2004" name="Genome Res.">
        <title>The status, quality, and expansion of the NIH full-length cDNA project: the Mammalian Gene Collection (MGC).</title>
        <authorList>
            <consortium name="The MGC Project Team"/>
        </authorList>
    </citation>
    <scope>NUCLEOTIDE SEQUENCE [LARGE SCALE MRNA]</scope>
    <source>
        <tissue>Lung</tissue>
    </source>
</reference>
<reference key="7">
    <citation type="journal article" date="2010" name="J. Biol. Chem.">
        <title>Claudin association with CD81 defines hepatitis C virus entry.</title>
        <authorList>
            <person name="Harris H.J."/>
            <person name="Davis C."/>
            <person name="Mullins J.G."/>
            <person name="Hu K."/>
            <person name="Goodall M."/>
            <person name="Farquhar M.J."/>
            <person name="Mee C.J."/>
            <person name="McCaffrey K."/>
            <person name="Young S."/>
            <person name="Drummer H."/>
            <person name="Balfe P."/>
            <person name="McKeating J.A."/>
        </authorList>
    </citation>
    <scope>SUBCELLULAR LOCATION</scope>
    <scope>INTERACTION WITH OCLN</scope>
</reference>
<reference key="8">
    <citation type="journal article" date="2019" name="Cell. Mol. Life Sci.">
        <title>Tight junction proteins at the blood-brain barrier: far more than claudin-5.</title>
        <authorList>
            <person name="Berndt P."/>
            <person name="Winkler L."/>
            <person name="Cording J."/>
            <person name="Breitkreuz-Korff O."/>
            <person name="Rex A."/>
            <person name="Dithmer S."/>
            <person name="Rausch V."/>
            <person name="Blasig R."/>
            <person name="Richter M."/>
            <person name="Sporbert A."/>
            <person name="Wolburg H."/>
            <person name="Blasig I.E."/>
            <person name="Haseloff R.F."/>
        </authorList>
    </citation>
    <scope>FUNCTION</scope>
    <scope>SUBCELLULAR LOCATION</scope>
</reference>
<reference key="9">
    <citation type="journal article" date="2021" name="Brain">
        <title>De novo stop-loss variants in CLDN11 cause hypomyelinating leukodystrophy.</title>
        <authorList>
            <person name="Riedhammer K.M."/>
            <person name="Stockler S."/>
            <person name="Ploski R."/>
            <person name="Wenzel M."/>
            <person name="Adis-Dutschmann B."/>
            <person name="Ahting U."/>
            <person name="Alhaddad B."/>
            <person name="Blaschek A."/>
            <person name="Haack T.B."/>
            <person name="Kopajtich R."/>
            <person name="Lee J."/>
            <person name="Murcia Pienkowski V."/>
            <person name="Pollak A."/>
            <person name="Szymanska K."/>
            <person name="Tarailo-Graovac M."/>
            <person name="van der Lee R."/>
            <person name="van Karnebeek C.D."/>
            <person name="Meitinger T."/>
            <person name="Kraegeloh-Mann I."/>
            <person name="Vill K."/>
        </authorList>
    </citation>
    <scope>INVOLVEMENT IN HLD22</scope>
</reference>
<reference key="10">
    <citation type="journal article" date="2021" name="Brain">
        <authorList>
            <person name="Riedhammer K.M."/>
            <person name="Stockler S."/>
            <person name="Ploski R."/>
            <person name="Wenzel M."/>
            <person name="Adis-Dutschmann B."/>
            <person name="Ahting U."/>
            <person name="Alhaddad B."/>
            <person name="Blaschek A."/>
            <person name="Haack T.B."/>
            <person name="Kopajtich R."/>
            <person name="Lee J."/>
            <person name="Murcia Pienkowski V."/>
            <person name="Pollak A."/>
            <person name="Szymanska K."/>
            <person name="Tarailo-Graovac M."/>
            <person name="van der Lee R."/>
            <person name="van Karnebeek C.D."/>
            <person name="Meitinger T."/>
            <person name="Kraegeloh-Mann I."/>
            <person name="Vill K."/>
        </authorList>
    </citation>
    <scope>ERRATUM OF PUBMED:33313762</scope>
</reference>
<keyword id="KW-0965">Cell junction</keyword>
<keyword id="KW-1003">Cell membrane</keyword>
<keyword id="KW-1026">Leukodystrophy</keyword>
<keyword id="KW-0472">Membrane</keyword>
<keyword id="KW-0597">Phosphoprotein</keyword>
<keyword id="KW-1267">Proteomics identification</keyword>
<keyword id="KW-1185">Reference proteome</keyword>
<keyword id="KW-0796">Tight junction</keyword>
<keyword id="KW-0812">Transmembrane</keyword>
<keyword id="KW-1133">Transmembrane helix</keyword>
<gene>
    <name type="primary">CLDN11</name>
    <name type="synonym">OSP</name>
    <name type="synonym">OTM</name>
</gene>
<sequence length="207" mass="21993">MVATCLQVVGFVTSFVGWIGVIVTTSTNDWVVTCGYTIPTCRKLDELGSKGLWADCVMATGLYHCKPLVDILILPGYVQACRALMIAASVLGLPAILLLLTVLPCIRMGQEPGVAKYRRAQLAGVLLILLALCALVATIWFPVCAHRETTIVSFGYSLYAGWIGAVLCLVGGCVILCCAGDAQAFGENRFYYTAGSSSPTHAKSAHV</sequence>
<evidence type="ECO:0000250" key="1">
    <source>
        <dbReference type="UniProtKB" id="Q60771"/>
    </source>
</evidence>
<evidence type="ECO:0000255" key="2"/>
<evidence type="ECO:0000269" key="3">
    <source>
    </source>
</evidence>
<evidence type="ECO:0000269" key="4">
    <source>
    </source>
</evidence>
<evidence type="ECO:0000269" key="5">
    <source>
    </source>
</evidence>
<evidence type="ECO:0000305" key="6"/>
<comment type="function">
    <text evidence="4">Plays a major role in tight junction-specific obliteration of the intercellular space, through calcium-independent cell-adhesion activity.</text>
</comment>
<comment type="subunit">
    <text evidence="1 3">Interacts with tetraspanin-3/TSPAN3 (By similarity). Interacts with OCLN (PubMed:20375010).</text>
</comment>
<comment type="interaction">
    <interactant intactId="EBI-12820543">
        <id>O75508</id>
    </interactant>
    <interactant intactId="EBI-19125216">
        <id>Q86WK6</id>
        <label>AMIGO1</label>
    </interactant>
    <organismsDiffer>false</organismsDiffer>
    <experiments>3</experiments>
</comment>
<comment type="interaction">
    <interactant intactId="EBI-12820543">
        <id>O75508</id>
    </interactant>
    <interactant intactId="EBI-11954292">
        <id>Q86V38</id>
        <label>ATN1</label>
    </interactant>
    <organismsDiffer>false</organismsDiffer>
    <experiments>3</experiments>
</comment>
<comment type="interaction">
    <interactant intactId="EBI-12820543">
        <id>O75508</id>
    </interactant>
    <interactant intactId="EBI-18041102">
        <id>Q6UWD8</id>
        <label>C16orf54</label>
    </interactant>
    <organismsDiffer>false</organismsDiffer>
    <experiments>3</experiments>
</comment>
<comment type="interaction">
    <interactant intactId="EBI-12820543">
        <id>O75508</id>
    </interactant>
    <interactant intactId="EBI-12142257">
        <id>Q8TBE3</id>
        <label>FNDC9</label>
    </interactant>
    <organismsDiffer>false</organismsDiffer>
    <experiments>3</experiments>
</comment>
<comment type="interaction">
    <interactant intactId="EBI-12820543">
        <id>O75508</id>
    </interactant>
    <interactant intactId="EBI-2432309">
        <id>Q92876</id>
        <label>KLK6</label>
    </interactant>
    <organismsDiffer>false</organismsDiffer>
    <experiments>3</experiments>
</comment>
<comment type="interaction">
    <interactant intactId="EBI-12820543">
        <id>O75508</id>
    </interactant>
    <interactant intactId="EBI-9018187">
        <id>P26715</id>
        <label>KLRC1</label>
    </interactant>
    <organismsDiffer>false</organismsDiffer>
    <experiments>3</experiments>
</comment>
<comment type="interaction">
    <interactant intactId="EBI-12820543">
        <id>O75508</id>
    </interactant>
    <interactant intactId="EBI-10171518">
        <id>A0PJX4</id>
        <label>SHISA3</label>
    </interactant>
    <organismsDiffer>false</organismsDiffer>
    <experiments>3</experiments>
</comment>
<comment type="interaction">
    <interactant intactId="EBI-12820543">
        <id>O75508</id>
    </interactant>
    <interactant intactId="EBI-741850">
        <id>Q9BZL3</id>
        <label>SMIM3</label>
    </interactant>
    <organismsDiffer>false</organismsDiffer>
    <experiments>3</experiments>
</comment>
<comment type="interaction">
    <interactant intactId="EBI-12820543">
        <id>O75508</id>
    </interactant>
    <interactant intactId="EBI-12078338">
        <id>O43278-2</id>
        <label>SPINT1</label>
    </interactant>
    <organismsDiffer>false</organismsDiffer>
    <experiments>3</experiments>
</comment>
<comment type="interaction">
    <interactant intactId="EBI-12820543">
        <id>O75508</id>
    </interactant>
    <interactant intactId="EBI-11742770">
        <id>Q96HE8</id>
        <label>TMEM80</label>
    </interactant>
    <organismsDiffer>false</organismsDiffer>
    <experiments>3</experiments>
</comment>
<comment type="interaction">
    <interactant intactId="EBI-12820543">
        <id>O75508</id>
    </interactant>
    <interactant intactId="EBI-524131">
        <id>O43557</id>
        <label>TNFSF14</label>
    </interactant>
    <organismsDiffer>false</organismsDiffer>
    <experiments>3</experiments>
</comment>
<comment type="interaction">
    <interactant intactId="EBI-12820543">
        <id>O75508</id>
    </interactant>
    <interactant intactId="EBI-17458299">
        <id>P21754-3</id>
        <label>ZP3</label>
    </interactant>
    <organismsDiffer>false</organismsDiffer>
    <experiments>3</experiments>
</comment>
<comment type="subcellular location">
    <subcellularLocation>
        <location evidence="4">Cell junction</location>
        <location evidence="4">Tight junction</location>
    </subcellularLocation>
    <subcellularLocation>
        <location evidence="3">Cell membrane</location>
        <topology evidence="2">Multi-pass membrane protein</topology>
    </subcellularLocation>
</comment>
<comment type="disease" evidence="5">
    <disease id="DI-06111">
        <name>Leukodystrophy, hypomyelinating, 22</name>
        <acronym>HLD22</acronym>
        <description>An autosomal dominant disorder characterized by global developmental delay, mildly impaired intellectual development, motor impairment, limb spasticity, dysarthria, and eye abnormalities including hypermetropia. Brain imaging shows hypomyelinating leukodystrophy.</description>
        <dbReference type="MIM" id="619328"/>
    </disease>
    <text>The disease is caused by variants affecting the gene represented in this entry.</text>
</comment>
<comment type="similarity">
    <text evidence="6">Belongs to the claudin family.</text>
</comment>
<accession>O75508</accession>
<accession>B2R7C1</accession>
<accession>D3DNQ5</accession>
<accession>Q5U0P3</accession>
<proteinExistence type="evidence at protein level"/>
<protein>
    <recommendedName>
        <fullName>Claudin-11</fullName>
    </recommendedName>
    <alternativeName>
        <fullName>Oligodendrocyte-specific protein</fullName>
    </alternativeName>
</protein>